<evidence type="ECO:0000256" key="1">
    <source>
        <dbReference type="SAM" id="MobiDB-lite"/>
    </source>
</evidence>
<evidence type="ECO:0000269" key="2">
    <source>
    </source>
</evidence>
<evidence type="ECO:0000303" key="3">
    <source>
    </source>
</evidence>
<evidence type="ECO:0000305" key="4"/>
<evidence type="ECO:0000312" key="5">
    <source>
        <dbReference type="EMBL" id="EAL61580.1"/>
    </source>
</evidence>
<gene>
    <name evidence="3" type="primary">tstC</name>
    <name evidence="5" type="ORF">DDB0191600</name>
</gene>
<dbReference type="EMBL" id="AAFI01000260">
    <property type="protein sequence ID" value="EAL61580.1"/>
    <property type="molecule type" value="Genomic_DNA"/>
</dbReference>
<dbReference type="RefSeq" id="XP_629998.1">
    <property type="nucleotide sequence ID" value="XM_629996.1"/>
</dbReference>
<dbReference type="PaxDb" id="44689-DDB0191600"/>
<dbReference type="KEGG" id="ddi:DDB_G0291768"/>
<dbReference type="dictyBase" id="DDB_G0291768">
    <property type="gene designation" value="tstC"/>
</dbReference>
<dbReference type="VEuPathDB" id="AmoebaDB:DDB_G0291768"/>
<dbReference type="HOGENOM" id="CLU_484347_0_0_1"/>
<dbReference type="OMA" id="IMFTLRH"/>
<dbReference type="PRO" id="PR:Q54E64"/>
<dbReference type="InterPro" id="IPR011012">
    <property type="entry name" value="Longin-like_dom_sf"/>
</dbReference>
<dbReference type="SUPFAM" id="SSF64356">
    <property type="entry name" value="SNARE-like"/>
    <property type="match status" value="1"/>
</dbReference>
<protein>
    <recommendedName>
        <fullName evidence="4">TSET complex member tstC</fullName>
    </recommendedName>
    <alternativeName>
        <fullName evidence="3">Protein TCUP</fullName>
    </alternativeName>
</protein>
<comment type="subunit">
    <text evidence="2">Component of the TSET complex, a heterohexamer composed of tstA, tstB, tstC, tstD, tstE and tstF, which may act in plasma membrane turnover. tstA, tstB, tstC and tstD are likely to be the core complex members with tstE and tstF acting as associated scaffold proteins.</text>
</comment>
<feature type="chain" id="PRO_0000445760" description="TSET complex member tstC">
    <location>
        <begin position="1"/>
        <end position="563"/>
    </location>
</feature>
<feature type="region of interest" description="Disordered" evidence="1">
    <location>
        <begin position="146"/>
        <end position="170"/>
    </location>
</feature>
<feature type="region of interest" description="Disordered" evidence="1">
    <location>
        <begin position="192"/>
        <end position="213"/>
    </location>
</feature>
<feature type="region of interest" description="Disordered" evidence="1">
    <location>
        <begin position="235"/>
        <end position="298"/>
    </location>
</feature>
<feature type="region of interest" description="Disordered" evidence="1">
    <location>
        <begin position="376"/>
        <end position="395"/>
    </location>
</feature>
<feature type="region of interest" description="Disordered" evidence="1">
    <location>
        <begin position="428"/>
        <end position="563"/>
    </location>
</feature>
<feature type="compositionally biased region" description="Basic and acidic residues" evidence="1">
    <location>
        <begin position="379"/>
        <end position="395"/>
    </location>
</feature>
<feature type="compositionally biased region" description="Low complexity" evidence="1">
    <location>
        <begin position="428"/>
        <end position="459"/>
    </location>
</feature>
<feature type="compositionally biased region" description="Polar residues" evidence="1">
    <location>
        <begin position="460"/>
        <end position="473"/>
    </location>
</feature>
<feature type="compositionally biased region" description="Low complexity" evidence="1">
    <location>
        <begin position="474"/>
        <end position="487"/>
    </location>
</feature>
<feature type="compositionally biased region" description="Low complexity" evidence="1">
    <location>
        <begin position="507"/>
        <end position="543"/>
    </location>
</feature>
<feature type="compositionally biased region" description="Polar residues" evidence="1">
    <location>
        <begin position="552"/>
        <end position="563"/>
    </location>
</feature>
<name>TSTC_DICDI</name>
<organism>
    <name type="scientific">Dictyostelium discoideum</name>
    <name type="common">Social amoeba</name>
    <dbReference type="NCBI Taxonomy" id="44689"/>
    <lineage>
        <taxon>Eukaryota</taxon>
        <taxon>Amoebozoa</taxon>
        <taxon>Evosea</taxon>
        <taxon>Eumycetozoa</taxon>
        <taxon>Dictyostelia</taxon>
        <taxon>Dictyosteliales</taxon>
        <taxon>Dictyosteliaceae</taxon>
        <taxon>Dictyostelium</taxon>
    </lineage>
</organism>
<accession>Q54E64</accession>
<proteinExistence type="evidence at protein level"/>
<sequence>MTIVGLVIQQHDGTILFQNVREYLSLDKAHLAAKAFKNQISSYDENFITKGSISHLTGSVVVLNMYRVYYMILNELFILAISQANDNPFEGSIYLARAKRVLWSVSKDFTTTQINKKYTEVYFALERVLFGEDGVEVLSQKISEVSPHQPPHYNTHHHTSTPSVAPSFITGGSTTPPPITIFGRLIEPNQSNSLSNSISNSNSNNNNNNNNDSININSINSNIYQTTVPLTLSNVLNSSNFNNNNNNNNNNNNNNNNSNNSLNNSNSNSNIISPSSSSGNLSSFNNNNNNEEYNNYNNNYNSLDNSYSLQFESLMRLEQSNIPEKIFTQPNTLPKIDKHIYDPPQTIKWGNPSVSHIGSSASSTRVTNRIMFTLRHPNAGKEAKEKEKEKENEFKEQQEINNMNNNNNGANGNSGGSGNVIIGSAAAGSASSKSSPSTSPLSSSYNPSSPETSENSFSATPISDSNSLKNSIDNNNNNNNNNNNNNNSGDTPETPKRKFSLSMGTFNNSKSSLSTSNSNISTPDNGASSPLASSTSGSASSAAAPPPVPLTNSAKTKMNFLNF</sequence>
<reference key="1">
    <citation type="journal article" date="2005" name="Nature">
        <title>The genome of the social amoeba Dictyostelium discoideum.</title>
        <authorList>
            <person name="Eichinger L."/>
            <person name="Pachebat J.A."/>
            <person name="Gloeckner G."/>
            <person name="Rajandream M.A."/>
            <person name="Sucgang R."/>
            <person name="Berriman M."/>
            <person name="Song J."/>
            <person name="Olsen R."/>
            <person name="Szafranski K."/>
            <person name="Xu Q."/>
            <person name="Tunggal B."/>
            <person name="Kummerfeld S."/>
            <person name="Madera M."/>
            <person name="Konfortov B.A."/>
            <person name="Rivero F."/>
            <person name="Bankier A.T."/>
            <person name="Lehmann R."/>
            <person name="Hamlin N."/>
            <person name="Davies R."/>
            <person name="Gaudet P."/>
            <person name="Fey P."/>
            <person name="Pilcher K."/>
            <person name="Chen G."/>
            <person name="Saunders D."/>
            <person name="Sodergren E.J."/>
            <person name="Davis P."/>
            <person name="Kerhornou A."/>
            <person name="Nie X."/>
            <person name="Hall N."/>
            <person name="Anjard C."/>
            <person name="Hemphill L."/>
            <person name="Bason N."/>
            <person name="Farbrother P."/>
            <person name="Desany B."/>
            <person name="Just E."/>
            <person name="Morio T."/>
            <person name="Rost R."/>
            <person name="Churcher C.M."/>
            <person name="Cooper J."/>
            <person name="Haydock S."/>
            <person name="van Driessche N."/>
            <person name="Cronin A."/>
            <person name="Goodhead I."/>
            <person name="Muzny D.M."/>
            <person name="Mourier T."/>
            <person name="Pain A."/>
            <person name="Lu M."/>
            <person name="Harper D."/>
            <person name="Lindsay R."/>
            <person name="Hauser H."/>
            <person name="James K.D."/>
            <person name="Quiles M."/>
            <person name="Madan Babu M."/>
            <person name="Saito T."/>
            <person name="Buchrieser C."/>
            <person name="Wardroper A."/>
            <person name="Felder M."/>
            <person name="Thangavelu M."/>
            <person name="Johnson D."/>
            <person name="Knights A."/>
            <person name="Loulseged H."/>
            <person name="Mungall K.L."/>
            <person name="Oliver K."/>
            <person name="Price C."/>
            <person name="Quail M.A."/>
            <person name="Urushihara H."/>
            <person name="Hernandez J."/>
            <person name="Rabbinowitsch E."/>
            <person name="Steffen D."/>
            <person name="Sanders M."/>
            <person name="Ma J."/>
            <person name="Kohara Y."/>
            <person name="Sharp S."/>
            <person name="Simmonds M.N."/>
            <person name="Spiegler S."/>
            <person name="Tivey A."/>
            <person name="Sugano S."/>
            <person name="White B."/>
            <person name="Walker D."/>
            <person name="Woodward J.R."/>
            <person name="Winckler T."/>
            <person name="Tanaka Y."/>
            <person name="Shaulsky G."/>
            <person name="Schleicher M."/>
            <person name="Weinstock G.M."/>
            <person name="Rosenthal A."/>
            <person name="Cox E.C."/>
            <person name="Chisholm R.L."/>
            <person name="Gibbs R.A."/>
            <person name="Loomis W.F."/>
            <person name="Platzer M."/>
            <person name="Kay R.R."/>
            <person name="Williams J.G."/>
            <person name="Dear P.H."/>
            <person name="Noegel A.A."/>
            <person name="Barrell B.G."/>
            <person name="Kuspa A."/>
        </authorList>
    </citation>
    <scope>NUCLEOTIDE SEQUENCE [LARGE SCALE GENOMIC DNA]</scope>
    <source>
        <strain>AX4</strain>
    </source>
</reference>
<reference evidence="4" key="2">
    <citation type="journal article" date="2014" name="Elife">
        <title>Characterization of TSET, an ancient and widespread membrane trafficking complex.</title>
        <authorList>
            <person name="Hirst J."/>
            <person name="Schlacht A."/>
            <person name="Norcott J.P."/>
            <person name="Traynor D."/>
            <person name="Bloomfield G."/>
            <person name="Antrobus R."/>
            <person name="Kay R.R."/>
            <person name="Dacks J.B."/>
            <person name="Robinson M.S."/>
        </authorList>
    </citation>
    <scope>IDENTIFICATION IN THE TSET COMPLEX</scope>
    <scope>IDENTIFICATION BY MASS SPECTROMETRY</scope>
</reference>